<organism>
    <name type="scientific">Pediococcus pentosaceus (strain ATCC 25745 / CCUG 21536 / LMG 10740 / 183-1w)</name>
    <dbReference type="NCBI Taxonomy" id="278197"/>
    <lineage>
        <taxon>Bacteria</taxon>
        <taxon>Bacillati</taxon>
        <taxon>Bacillota</taxon>
        <taxon>Bacilli</taxon>
        <taxon>Lactobacillales</taxon>
        <taxon>Lactobacillaceae</taxon>
        <taxon>Pediococcus</taxon>
    </lineage>
</organism>
<protein>
    <recommendedName>
        <fullName evidence="1">Cell cycle protein GpsB</fullName>
    </recommendedName>
    <alternativeName>
        <fullName evidence="1">Guiding PBP1-shuttling protein</fullName>
    </alternativeName>
</protein>
<sequence>MDNINFTPKDILQKEFKPKMRGYDPADVDTFLDSVIKDYENFGKEIERMKNENDRLTDKVDELNKQVSAGGTVEESAPVSGATNVDVLKRLSNLERRVFGAQLEDTDNSSHRI</sequence>
<keyword id="KW-0131">Cell cycle</keyword>
<keyword id="KW-0132">Cell division</keyword>
<keyword id="KW-0133">Cell shape</keyword>
<keyword id="KW-0175">Coiled coil</keyword>
<keyword id="KW-0963">Cytoplasm</keyword>
<reference key="1">
    <citation type="journal article" date="2006" name="Proc. Natl. Acad. Sci. U.S.A.">
        <title>Comparative genomics of the lactic acid bacteria.</title>
        <authorList>
            <person name="Makarova K.S."/>
            <person name="Slesarev A."/>
            <person name="Wolf Y.I."/>
            <person name="Sorokin A."/>
            <person name="Mirkin B."/>
            <person name="Koonin E.V."/>
            <person name="Pavlov A."/>
            <person name="Pavlova N."/>
            <person name="Karamychev V."/>
            <person name="Polouchine N."/>
            <person name="Shakhova V."/>
            <person name="Grigoriev I."/>
            <person name="Lou Y."/>
            <person name="Rohksar D."/>
            <person name="Lucas S."/>
            <person name="Huang K."/>
            <person name="Goodstein D.M."/>
            <person name="Hawkins T."/>
            <person name="Plengvidhya V."/>
            <person name="Welker D."/>
            <person name="Hughes J."/>
            <person name="Goh Y."/>
            <person name="Benson A."/>
            <person name="Baldwin K."/>
            <person name="Lee J.-H."/>
            <person name="Diaz-Muniz I."/>
            <person name="Dosti B."/>
            <person name="Smeianov V."/>
            <person name="Wechter W."/>
            <person name="Barabote R."/>
            <person name="Lorca G."/>
            <person name="Altermann E."/>
            <person name="Barrangou R."/>
            <person name="Ganesan B."/>
            <person name="Xie Y."/>
            <person name="Rawsthorne H."/>
            <person name="Tamir D."/>
            <person name="Parker C."/>
            <person name="Breidt F."/>
            <person name="Broadbent J.R."/>
            <person name="Hutkins R."/>
            <person name="O'Sullivan D."/>
            <person name="Steele J."/>
            <person name="Unlu G."/>
            <person name="Saier M.H. Jr."/>
            <person name="Klaenhammer T."/>
            <person name="Richardson P."/>
            <person name="Kozyavkin S."/>
            <person name="Weimer B.C."/>
            <person name="Mills D.A."/>
        </authorList>
    </citation>
    <scope>NUCLEOTIDE SEQUENCE [LARGE SCALE GENOMIC DNA]</scope>
    <source>
        <strain>ATCC 25745 / CCUG 21536 / LMG 10740 / 183-1w</strain>
    </source>
</reference>
<feature type="chain" id="PRO_0000337930" description="Cell cycle protein GpsB">
    <location>
        <begin position="1"/>
        <end position="113"/>
    </location>
</feature>
<feature type="coiled-coil region" evidence="1">
    <location>
        <begin position="32"/>
        <end position="70"/>
    </location>
</feature>
<name>GPSB_PEDPA</name>
<dbReference type="EMBL" id="CP000422">
    <property type="protein sequence ID" value="ABJ67992.1"/>
    <property type="molecule type" value="Genomic_DNA"/>
</dbReference>
<dbReference type="RefSeq" id="WP_002833051.1">
    <property type="nucleotide sequence ID" value="NC_008525.1"/>
</dbReference>
<dbReference type="SMR" id="Q03FN0"/>
<dbReference type="STRING" id="278197.PEPE_0934"/>
<dbReference type="GeneID" id="33061986"/>
<dbReference type="KEGG" id="ppe:PEPE_0934"/>
<dbReference type="eggNOG" id="COG3599">
    <property type="taxonomic scope" value="Bacteria"/>
</dbReference>
<dbReference type="HOGENOM" id="CLU_140309_1_0_9"/>
<dbReference type="OrthoDB" id="389699at2"/>
<dbReference type="Proteomes" id="UP000000773">
    <property type="component" value="Chromosome"/>
</dbReference>
<dbReference type="GO" id="GO:0005737">
    <property type="term" value="C:cytoplasm"/>
    <property type="evidence" value="ECO:0007669"/>
    <property type="project" value="UniProtKB-SubCell"/>
</dbReference>
<dbReference type="GO" id="GO:0051301">
    <property type="term" value="P:cell division"/>
    <property type="evidence" value="ECO:0007669"/>
    <property type="project" value="UniProtKB-UniRule"/>
</dbReference>
<dbReference type="GO" id="GO:0008360">
    <property type="term" value="P:regulation of cell shape"/>
    <property type="evidence" value="ECO:0007669"/>
    <property type="project" value="UniProtKB-UniRule"/>
</dbReference>
<dbReference type="Gene3D" id="6.10.250.660">
    <property type="match status" value="1"/>
</dbReference>
<dbReference type="HAMAP" id="MF_02011">
    <property type="entry name" value="GpsB"/>
    <property type="match status" value="1"/>
</dbReference>
<dbReference type="InterPro" id="IPR011229">
    <property type="entry name" value="Cell_cycle_GpsB"/>
</dbReference>
<dbReference type="InterPro" id="IPR019933">
    <property type="entry name" value="DivIVA_domain"/>
</dbReference>
<dbReference type="InterPro" id="IPR007793">
    <property type="entry name" value="DivIVA_fam"/>
</dbReference>
<dbReference type="NCBIfam" id="TIGR03544">
    <property type="entry name" value="DivI1A_domain"/>
    <property type="match status" value="1"/>
</dbReference>
<dbReference type="NCBIfam" id="NF010725">
    <property type="entry name" value="PRK14127.1"/>
    <property type="match status" value="1"/>
</dbReference>
<dbReference type="PANTHER" id="PTHR35794:SF1">
    <property type="entry name" value="CELL CYCLE PROTEIN GPSB"/>
    <property type="match status" value="1"/>
</dbReference>
<dbReference type="PANTHER" id="PTHR35794">
    <property type="entry name" value="CELL DIVISION PROTEIN DIVIVA"/>
    <property type="match status" value="1"/>
</dbReference>
<dbReference type="Pfam" id="PF05103">
    <property type="entry name" value="DivIVA"/>
    <property type="match status" value="1"/>
</dbReference>
<dbReference type="PIRSF" id="PIRSF029938">
    <property type="entry name" value="UCP029938"/>
    <property type="match status" value="1"/>
</dbReference>
<comment type="function">
    <text evidence="1">Divisome component that associates with the complex late in its assembly, after the Z-ring is formed, and is dependent on DivIC and PBP2B for its recruitment to the divisome. Together with EzrA, is a key component of the system that regulates PBP1 localization during cell cycle progression. Its main role could be the removal of PBP1 from the cell pole after pole maturation is completed. Also contributes to the recruitment of PBP1 to the division complex. Not essential for septum formation.</text>
</comment>
<comment type="subunit">
    <text evidence="1">Forms polymers through the coiled coil domains. Interacts with PBP1, MreC and EzrA.</text>
</comment>
<comment type="subcellular location">
    <subcellularLocation>
        <location evidence="1">Cytoplasm</location>
    </subcellularLocation>
    <text evidence="1">Shuttles between the lateral wall and the division site in a cell cycle-dependent manner.</text>
</comment>
<comment type="similarity">
    <text evidence="1">Belongs to the GpsB family.</text>
</comment>
<gene>
    <name evidence="1" type="primary">gpsB</name>
    <name type="ordered locus">PEPE_0934</name>
</gene>
<evidence type="ECO:0000255" key="1">
    <source>
        <dbReference type="HAMAP-Rule" id="MF_02011"/>
    </source>
</evidence>
<proteinExistence type="inferred from homology"/>
<accession>Q03FN0</accession>